<reference key="1">
    <citation type="submission" date="2006-08" db="EMBL/GenBank/DDBJ databases">
        <title>Complete sequence of Shewanella sp. MR-4.</title>
        <authorList>
            <consortium name="US DOE Joint Genome Institute"/>
            <person name="Copeland A."/>
            <person name="Lucas S."/>
            <person name="Lapidus A."/>
            <person name="Barry K."/>
            <person name="Detter J.C."/>
            <person name="Glavina del Rio T."/>
            <person name="Hammon N."/>
            <person name="Israni S."/>
            <person name="Dalin E."/>
            <person name="Tice H."/>
            <person name="Pitluck S."/>
            <person name="Kiss H."/>
            <person name="Brettin T."/>
            <person name="Bruce D."/>
            <person name="Han C."/>
            <person name="Tapia R."/>
            <person name="Gilna P."/>
            <person name="Schmutz J."/>
            <person name="Larimer F."/>
            <person name="Land M."/>
            <person name="Hauser L."/>
            <person name="Kyrpides N."/>
            <person name="Mikhailova N."/>
            <person name="Nealson K."/>
            <person name="Konstantinidis K."/>
            <person name="Klappenbach J."/>
            <person name="Tiedje J."/>
            <person name="Richardson P."/>
        </authorList>
    </citation>
    <scope>NUCLEOTIDE SEQUENCE [LARGE SCALE GENOMIC DNA]</scope>
    <source>
        <strain>MR-4</strain>
    </source>
</reference>
<feature type="chain" id="PRO_0000326954" description="Protoheme IX farnesyltransferase 2">
    <location>
        <begin position="1"/>
        <end position="310"/>
    </location>
</feature>
<feature type="transmembrane region" description="Helical" evidence="1">
    <location>
        <begin position="25"/>
        <end position="45"/>
    </location>
</feature>
<feature type="transmembrane region" description="Helical" evidence="1">
    <location>
        <begin position="49"/>
        <end position="69"/>
    </location>
</feature>
<feature type="transmembrane region" description="Helical" evidence="1">
    <location>
        <begin position="98"/>
        <end position="118"/>
    </location>
</feature>
<feature type="transmembrane region" description="Helical" evidence="1">
    <location>
        <begin position="121"/>
        <end position="141"/>
    </location>
</feature>
<feature type="transmembrane region" description="Helical" evidence="1">
    <location>
        <begin position="145"/>
        <end position="165"/>
    </location>
</feature>
<feature type="transmembrane region" description="Helical" evidence="1">
    <location>
        <begin position="176"/>
        <end position="196"/>
    </location>
</feature>
<feature type="transmembrane region" description="Helical" evidence="1">
    <location>
        <begin position="222"/>
        <end position="242"/>
    </location>
</feature>
<feature type="transmembrane region" description="Helical" evidence="1">
    <location>
        <begin position="245"/>
        <end position="265"/>
    </location>
</feature>
<feature type="transmembrane region" description="Helical" evidence="1">
    <location>
        <begin position="277"/>
        <end position="297"/>
    </location>
</feature>
<comment type="function">
    <text evidence="1">Converts heme B (protoheme IX) to heme O by substitution of the vinyl group on carbon 2 of heme B porphyrin ring with a hydroxyethyl farnesyl side group.</text>
</comment>
<comment type="catalytic activity">
    <reaction evidence="1">
        <text>heme b + (2E,6E)-farnesyl diphosphate + H2O = Fe(II)-heme o + diphosphate</text>
        <dbReference type="Rhea" id="RHEA:28070"/>
        <dbReference type="ChEBI" id="CHEBI:15377"/>
        <dbReference type="ChEBI" id="CHEBI:33019"/>
        <dbReference type="ChEBI" id="CHEBI:60344"/>
        <dbReference type="ChEBI" id="CHEBI:60530"/>
        <dbReference type="ChEBI" id="CHEBI:175763"/>
        <dbReference type="EC" id="2.5.1.141"/>
    </reaction>
</comment>
<comment type="pathway">
    <text evidence="1">Porphyrin-containing compound metabolism; heme O biosynthesis; heme O from protoheme: step 1/1.</text>
</comment>
<comment type="subcellular location">
    <subcellularLocation>
        <location evidence="1">Cell inner membrane</location>
        <topology evidence="1">Multi-pass membrane protein</topology>
    </subcellularLocation>
</comment>
<comment type="miscellaneous">
    <text evidence="1">Carbon 2 of the heme B porphyrin ring is defined according to the Fischer nomenclature.</text>
</comment>
<comment type="similarity">
    <text evidence="1">Belongs to the UbiA prenyltransferase family. Protoheme IX farnesyltransferase subfamily.</text>
</comment>
<organism>
    <name type="scientific">Shewanella sp. (strain MR-4)</name>
    <dbReference type="NCBI Taxonomy" id="60480"/>
    <lineage>
        <taxon>Bacteria</taxon>
        <taxon>Pseudomonadati</taxon>
        <taxon>Pseudomonadota</taxon>
        <taxon>Gammaproteobacteria</taxon>
        <taxon>Alteromonadales</taxon>
        <taxon>Shewanellaceae</taxon>
        <taxon>Shewanella</taxon>
    </lineage>
</organism>
<name>CYOE2_SHESM</name>
<evidence type="ECO:0000255" key="1">
    <source>
        <dbReference type="HAMAP-Rule" id="MF_00154"/>
    </source>
</evidence>
<protein>
    <recommendedName>
        <fullName evidence="1">Protoheme IX farnesyltransferase 2</fullName>
        <ecNumber evidence="1">2.5.1.141</ecNumber>
    </recommendedName>
    <alternativeName>
        <fullName evidence="1">Heme B farnesyltransferase 2</fullName>
    </alternativeName>
    <alternativeName>
        <fullName evidence="1">Heme O synthase 2</fullName>
    </alternativeName>
</protein>
<gene>
    <name evidence="1" type="primary">cyoE2</name>
    <name type="ordered locus">Shewmr4_3827</name>
</gene>
<dbReference type="EC" id="2.5.1.141" evidence="1"/>
<dbReference type="EMBL" id="CP000446">
    <property type="protein sequence ID" value="ABI40890.1"/>
    <property type="molecule type" value="Genomic_DNA"/>
</dbReference>
<dbReference type="RefSeq" id="WP_011624548.1">
    <property type="nucleotide sequence ID" value="NC_008321.1"/>
</dbReference>
<dbReference type="SMR" id="Q0HDH7"/>
<dbReference type="KEGG" id="she:Shewmr4_3827"/>
<dbReference type="HOGENOM" id="CLU_029631_0_0_6"/>
<dbReference type="UniPathway" id="UPA00834">
    <property type="reaction ID" value="UER00712"/>
</dbReference>
<dbReference type="GO" id="GO:0005886">
    <property type="term" value="C:plasma membrane"/>
    <property type="evidence" value="ECO:0007669"/>
    <property type="project" value="UniProtKB-SubCell"/>
</dbReference>
<dbReference type="GO" id="GO:0008495">
    <property type="term" value="F:protoheme IX farnesyltransferase activity"/>
    <property type="evidence" value="ECO:0007669"/>
    <property type="project" value="UniProtKB-UniRule"/>
</dbReference>
<dbReference type="GO" id="GO:0048034">
    <property type="term" value="P:heme O biosynthetic process"/>
    <property type="evidence" value="ECO:0007669"/>
    <property type="project" value="UniProtKB-UniRule"/>
</dbReference>
<dbReference type="CDD" id="cd13957">
    <property type="entry name" value="PT_UbiA_Cox10"/>
    <property type="match status" value="1"/>
</dbReference>
<dbReference type="FunFam" id="1.10.357.140:FF:000001">
    <property type="entry name" value="Protoheme IX farnesyltransferase"/>
    <property type="match status" value="1"/>
</dbReference>
<dbReference type="Gene3D" id="1.10.357.140">
    <property type="entry name" value="UbiA prenyltransferase"/>
    <property type="match status" value="1"/>
</dbReference>
<dbReference type="HAMAP" id="MF_00154">
    <property type="entry name" value="CyoE_CtaB"/>
    <property type="match status" value="1"/>
</dbReference>
<dbReference type="InterPro" id="IPR006369">
    <property type="entry name" value="Protohaem_IX_farnesylTrfase"/>
</dbReference>
<dbReference type="InterPro" id="IPR000537">
    <property type="entry name" value="UbiA_prenyltransferase"/>
</dbReference>
<dbReference type="InterPro" id="IPR030470">
    <property type="entry name" value="UbiA_prenylTrfase_CS"/>
</dbReference>
<dbReference type="InterPro" id="IPR044878">
    <property type="entry name" value="UbiA_sf"/>
</dbReference>
<dbReference type="NCBIfam" id="TIGR01473">
    <property type="entry name" value="cyoE_ctaB"/>
    <property type="match status" value="1"/>
</dbReference>
<dbReference type="NCBIfam" id="NF003348">
    <property type="entry name" value="PRK04375.1-1"/>
    <property type="match status" value="1"/>
</dbReference>
<dbReference type="PANTHER" id="PTHR43448">
    <property type="entry name" value="PROTOHEME IX FARNESYLTRANSFERASE, MITOCHONDRIAL"/>
    <property type="match status" value="1"/>
</dbReference>
<dbReference type="PANTHER" id="PTHR43448:SF2">
    <property type="entry name" value="PROTOHEME IX FARNESYLTRANSFERASE, MITOCHONDRIAL"/>
    <property type="match status" value="1"/>
</dbReference>
<dbReference type="Pfam" id="PF01040">
    <property type="entry name" value="UbiA"/>
    <property type="match status" value="1"/>
</dbReference>
<dbReference type="PROSITE" id="PS00943">
    <property type="entry name" value="UBIA"/>
    <property type="match status" value="1"/>
</dbReference>
<keyword id="KW-0997">Cell inner membrane</keyword>
<keyword id="KW-1003">Cell membrane</keyword>
<keyword id="KW-0350">Heme biosynthesis</keyword>
<keyword id="KW-0472">Membrane</keyword>
<keyword id="KW-0808">Transferase</keyword>
<keyword id="KW-0812">Transmembrane</keyword>
<keyword id="KW-1133">Transmembrane helix</keyword>
<sequence>MNTQARLTSTQWKARFKGYVQVTKPGIIFGNLISVAGGFLLAAKGDVDLVLMLASLVGLSLVVASGCAINNCIDRDIDAKMQRTCKRVTVTGEIPLSHVLLFGIALGVLGFGILALFTNTLALLFAAIGYVVYVGIYSLYMKRNSVYGTLVGSFSGAVPPVVGYCSVTGQMDMGAVILLLMFSLWQMPHSYAIAIFRFNDYAAAKIPVLPVAEGMAKAKHHIVLYIAVFALVSTMLPLAGYTGTAFMAVTCATSLWWLTMALKGYRQDVDMPRWARQVFGFSIITITALSVTMALDFQAVSQTPLFTLVR</sequence>
<accession>Q0HDH7</accession>
<proteinExistence type="inferred from homology"/>